<protein>
    <recommendedName>
        <fullName>Aquaporin SIP1-1</fullName>
    </recommendedName>
    <alternativeName>
        <fullName>Small basic intrinsic protein 1-1</fullName>
        <shortName>AtSIP1;1</shortName>
    </alternativeName>
</protein>
<reference key="1">
    <citation type="journal article" date="2000" name="Nature">
        <title>Sequence and analysis of chromosome 3 of the plant Arabidopsis thaliana.</title>
        <authorList>
            <person name="Salanoubat M."/>
            <person name="Lemcke K."/>
            <person name="Rieger M."/>
            <person name="Ansorge W."/>
            <person name="Unseld M."/>
            <person name="Fartmann B."/>
            <person name="Valle G."/>
            <person name="Bloecker H."/>
            <person name="Perez-Alonso M."/>
            <person name="Obermaier B."/>
            <person name="Delseny M."/>
            <person name="Boutry M."/>
            <person name="Grivell L.A."/>
            <person name="Mache R."/>
            <person name="Puigdomenech P."/>
            <person name="De Simone V."/>
            <person name="Choisne N."/>
            <person name="Artiguenave F."/>
            <person name="Robert C."/>
            <person name="Brottier P."/>
            <person name="Wincker P."/>
            <person name="Cattolico L."/>
            <person name="Weissenbach J."/>
            <person name="Saurin W."/>
            <person name="Quetier F."/>
            <person name="Schaefer M."/>
            <person name="Mueller-Auer S."/>
            <person name="Gabel C."/>
            <person name="Fuchs M."/>
            <person name="Benes V."/>
            <person name="Wurmbach E."/>
            <person name="Drzonek H."/>
            <person name="Erfle H."/>
            <person name="Jordan N."/>
            <person name="Bangert S."/>
            <person name="Wiedelmann R."/>
            <person name="Kranz H."/>
            <person name="Voss H."/>
            <person name="Holland R."/>
            <person name="Brandt P."/>
            <person name="Nyakatura G."/>
            <person name="Vezzi A."/>
            <person name="D'Angelo M."/>
            <person name="Pallavicini A."/>
            <person name="Toppo S."/>
            <person name="Simionati B."/>
            <person name="Conrad A."/>
            <person name="Hornischer K."/>
            <person name="Kauer G."/>
            <person name="Loehnert T.-H."/>
            <person name="Nordsiek G."/>
            <person name="Reichelt J."/>
            <person name="Scharfe M."/>
            <person name="Schoen O."/>
            <person name="Bargues M."/>
            <person name="Terol J."/>
            <person name="Climent J."/>
            <person name="Navarro P."/>
            <person name="Collado C."/>
            <person name="Perez-Perez A."/>
            <person name="Ottenwaelder B."/>
            <person name="Duchemin D."/>
            <person name="Cooke R."/>
            <person name="Laudie M."/>
            <person name="Berger-Llauro C."/>
            <person name="Purnelle B."/>
            <person name="Masuy D."/>
            <person name="de Haan M."/>
            <person name="Maarse A.C."/>
            <person name="Alcaraz J.-P."/>
            <person name="Cottet A."/>
            <person name="Casacuberta E."/>
            <person name="Monfort A."/>
            <person name="Argiriou A."/>
            <person name="Flores M."/>
            <person name="Liguori R."/>
            <person name="Vitale D."/>
            <person name="Mannhaupt G."/>
            <person name="Haase D."/>
            <person name="Schoof H."/>
            <person name="Rudd S."/>
            <person name="Zaccaria P."/>
            <person name="Mewes H.-W."/>
            <person name="Mayer K.F.X."/>
            <person name="Kaul S."/>
            <person name="Town C.D."/>
            <person name="Koo H.L."/>
            <person name="Tallon L.J."/>
            <person name="Jenkins J."/>
            <person name="Rooney T."/>
            <person name="Rizzo M."/>
            <person name="Walts A."/>
            <person name="Utterback T."/>
            <person name="Fujii C.Y."/>
            <person name="Shea T.P."/>
            <person name="Creasy T.H."/>
            <person name="Haas B."/>
            <person name="Maiti R."/>
            <person name="Wu D."/>
            <person name="Peterson J."/>
            <person name="Van Aken S."/>
            <person name="Pai G."/>
            <person name="Militscher J."/>
            <person name="Sellers P."/>
            <person name="Gill J.E."/>
            <person name="Feldblyum T.V."/>
            <person name="Preuss D."/>
            <person name="Lin X."/>
            <person name="Nierman W.C."/>
            <person name="Salzberg S.L."/>
            <person name="White O."/>
            <person name="Venter J.C."/>
            <person name="Fraser C.M."/>
            <person name="Kaneko T."/>
            <person name="Nakamura Y."/>
            <person name="Sato S."/>
            <person name="Kato T."/>
            <person name="Asamizu E."/>
            <person name="Sasamoto S."/>
            <person name="Kimura T."/>
            <person name="Idesawa K."/>
            <person name="Kawashima K."/>
            <person name="Kishida Y."/>
            <person name="Kiyokawa C."/>
            <person name="Kohara M."/>
            <person name="Matsumoto M."/>
            <person name="Matsuno A."/>
            <person name="Muraki A."/>
            <person name="Nakayama S."/>
            <person name="Nakazaki N."/>
            <person name="Shinpo S."/>
            <person name="Takeuchi C."/>
            <person name="Wada T."/>
            <person name="Watanabe A."/>
            <person name="Yamada M."/>
            <person name="Yasuda M."/>
            <person name="Tabata S."/>
        </authorList>
    </citation>
    <scope>NUCLEOTIDE SEQUENCE [LARGE SCALE GENOMIC DNA]</scope>
    <source>
        <strain>cv. Columbia</strain>
    </source>
</reference>
<reference key="2">
    <citation type="journal article" date="2017" name="Plant J.">
        <title>Araport11: a complete reannotation of the Arabidopsis thaliana reference genome.</title>
        <authorList>
            <person name="Cheng C.Y."/>
            <person name="Krishnakumar V."/>
            <person name="Chan A.P."/>
            <person name="Thibaud-Nissen F."/>
            <person name="Schobel S."/>
            <person name="Town C.D."/>
        </authorList>
    </citation>
    <scope>GENOME REANNOTATION</scope>
    <source>
        <strain>cv. Columbia</strain>
    </source>
</reference>
<reference key="3">
    <citation type="submission" date="2006-07" db="EMBL/GenBank/DDBJ databases">
        <title>Large-scale analysis of RIKEN Arabidopsis full-length (RAFL) cDNAs.</title>
        <authorList>
            <person name="Totoki Y."/>
            <person name="Seki M."/>
            <person name="Ishida J."/>
            <person name="Nakajima M."/>
            <person name="Enju A."/>
            <person name="Kamiya A."/>
            <person name="Narusaka M."/>
            <person name="Shin-i T."/>
            <person name="Nakagawa M."/>
            <person name="Sakamoto N."/>
            <person name="Oishi K."/>
            <person name="Kohara Y."/>
            <person name="Kobayashi M."/>
            <person name="Toyoda A."/>
            <person name="Sakaki Y."/>
            <person name="Sakurai T."/>
            <person name="Iida K."/>
            <person name="Akiyama K."/>
            <person name="Satou M."/>
            <person name="Toyoda T."/>
            <person name="Konagaya A."/>
            <person name="Carninci P."/>
            <person name="Kawai J."/>
            <person name="Hayashizaki Y."/>
            <person name="Shinozaki K."/>
        </authorList>
    </citation>
    <scope>NUCLEOTIDE SEQUENCE [LARGE SCALE MRNA]</scope>
    <source>
        <strain>cv. Columbia</strain>
    </source>
</reference>
<reference key="4">
    <citation type="journal article" date="2002" name="Genome Biol.">
        <title>From genome to function: the Arabidopsis aquaporins.</title>
        <authorList>
            <person name="Quigley F."/>
            <person name="Rosenberg J.M."/>
            <person name="Shachar-Hill Y."/>
            <person name="Bohnert H.J."/>
        </authorList>
    </citation>
    <scope>NOMENCLATURE</scope>
    <scope>TISSUE SPECIFICITY</scope>
</reference>
<reference key="5">
    <citation type="journal article" date="2005" name="FEBS Lett.">
        <title>Novel type aquaporin SIPs are mainly localized to the ER membrane and show cell-specific expression in Arabidopsis thaliana.</title>
        <authorList>
            <person name="Ishikawa F."/>
            <person name="Suga S."/>
            <person name="Uemura T."/>
            <person name="Sato M.H."/>
            <person name="Maeshima M."/>
        </authorList>
    </citation>
    <scope>FUNCTION</scope>
    <scope>SUBCELLULAR LOCATION</scope>
    <scope>TISSUE SPECIFICITY</scope>
</reference>
<dbReference type="EMBL" id="AC016829">
    <property type="protein sequence ID" value="AAF26804.1"/>
    <property type="molecule type" value="Genomic_DNA"/>
</dbReference>
<dbReference type="EMBL" id="CP002686">
    <property type="protein sequence ID" value="AEE74036.1"/>
    <property type="molecule type" value="Genomic_DNA"/>
</dbReference>
<dbReference type="EMBL" id="AK226432">
    <property type="protein sequence ID" value="BAE98575.1"/>
    <property type="molecule type" value="mRNA"/>
</dbReference>
<dbReference type="SMR" id="Q9M8W5"/>
<dbReference type="FunCoup" id="Q9M8W5">
    <property type="interactions" value="648"/>
</dbReference>
<dbReference type="STRING" id="3702.Q9M8W5"/>
<dbReference type="TCDB" id="1.A.8.10.5">
    <property type="family name" value="the major intrinsic protein (mip) family"/>
</dbReference>
<dbReference type="PaxDb" id="3702-AT3G04090.1"/>
<dbReference type="ProteomicsDB" id="234463"/>
<dbReference type="EnsemblPlants" id="AT3G04090.1">
    <property type="protein sequence ID" value="AT3G04090.1"/>
    <property type="gene ID" value="AT3G04090"/>
</dbReference>
<dbReference type="GeneID" id="819564"/>
<dbReference type="Gramene" id="AT3G04090.1">
    <property type="protein sequence ID" value="AT3G04090.1"/>
    <property type="gene ID" value="AT3G04090"/>
</dbReference>
<dbReference type="KEGG" id="ath:AT3G04090"/>
<dbReference type="Araport" id="AT3G04090"/>
<dbReference type="TAIR" id="AT3G04090">
    <property type="gene designation" value="SIP1A"/>
</dbReference>
<dbReference type="eggNOG" id="KOG0223">
    <property type="taxonomic scope" value="Eukaryota"/>
</dbReference>
<dbReference type="HOGENOM" id="CLU_100006_0_0_1"/>
<dbReference type="InParanoid" id="Q9M8W5"/>
<dbReference type="OMA" id="FGWAYVY"/>
<dbReference type="OrthoDB" id="3222at2759"/>
<dbReference type="PhylomeDB" id="Q9M8W5"/>
<dbReference type="PRO" id="PR:Q9M8W5"/>
<dbReference type="Proteomes" id="UP000006548">
    <property type="component" value="Chromosome 3"/>
</dbReference>
<dbReference type="ExpressionAtlas" id="Q9M8W5">
    <property type="expression patterns" value="baseline and differential"/>
</dbReference>
<dbReference type="GO" id="GO:0005783">
    <property type="term" value="C:endoplasmic reticulum"/>
    <property type="evidence" value="ECO:0000314"/>
    <property type="project" value="TAIR"/>
</dbReference>
<dbReference type="GO" id="GO:0005789">
    <property type="term" value="C:endoplasmic reticulum membrane"/>
    <property type="evidence" value="ECO:0007669"/>
    <property type="project" value="UniProtKB-SubCell"/>
</dbReference>
<dbReference type="GO" id="GO:0015250">
    <property type="term" value="F:water channel activity"/>
    <property type="evidence" value="ECO:0000314"/>
    <property type="project" value="TAIR"/>
</dbReference>
<dbReference type="FunFam" id="1.20.1080.10:FF:000043">
    <property type="entry name" value="Aquaporin SIP1-1"/>
    <property type="match status" value="1"/>
</dbReference>
<dbReference type="Gene3D" id="1.20.1080.10">
    <property type="entry name" value="Glycerol uptake facilitator protein"/>
    <property type="match status" value="1"/>
</dbReference>
<dbReference type="InterPro" id="IPR023271">
    <property type="entry name" value="Aquaporin-like"/>
</dbReference>
<dbReference type="InterPro" id="IPR000425">
    <property type="entry name" value="MIP"/>
</dbReference>
<dbReference type="InterPro" id="IPR044222">
    <property type="entry name" value="SIP1-1/2-like"/>
</dbReference>
<dbReference type="PANTHER" id="PTHR46739">
    <property type="entry name" value="AQUAPORIN SIP1-1"/>
    <property type="match status" value="1"/>
</dbReference>
<dbReference type="PANTHER" id="PTHR46739:SF3">
    <property type="entry name" value="AQUAPORIN SIP1-1"/>
    <property type="match status" value="1"/>
</dbReference>
<dbReference type="Pfam" id="PF00230">
    <property type="entry name" value="MIP"/>
    <property type="match status" value="1"/>
</dbReference>
<dbReference type="PRINTS" id="PR00783">
    <property type="entry name" value="MINTRINSICP"/>
</dbReference>
<dbReference type="SUPFAM" id="SSF81338">
    <property type="entry name" value="Aquaporin-like"/>
    <property type="match status" value="1"/>
</dbReference>
<feature type="chain" id="PRO_0000064073" description="Aquaporin SIP1-1">
    <location>
        <begin position="1"/>
        <end position="240"/>
    </location>
</feature>
<feature type="transmembrane region" description="Helical; Name=1" evidence="1">
    <location>
        <begin position="13"/>
        <end position="33"/>
    </location>
</feature>
<feature type="transmembrane region" description="Helical; Name=2" evidence="1">
    <location>
        <begin position="44"/>
        <end position="64"/>
    </location>
</feature>
<feature type="transmembrane region" description="Helical; Name=3" evidence="1">
    <location>
        <begin position="89"/>
        <end position="109"/>
    </location>
</feature>
<feature type="transmembrane region" description="Helical; Name=4" evidence="1">
    <location>
        <begin position="132"/>
        <end position="152"/>
    </location>
</feature>
<feature type="transmembrane region" description="Helical; Name=5" evidence="1">
    <location>
        <begin position="163"/>
        <end position="183"/>
    </location>
</feature>
<feature type="transmembrane region" description="Helical; Name=6" evidence="1">
    <location>
        <begin position="203"/>
        <end position="223"/>
    </location>
</feature>
<feature type="short sequence motif" description="NPA 1">
    <location>
        <begin position="70"/>
        <end position="72"/>
    </location>
</feature>
<feature type="short sequence motif" description="NPA 2">
    <location>
        <begin position="185"/>
        <end position="187"/>
    </location>
</feature>
<accession>Q9M8W5</accession>
<accession>Q0WWC3</accession>
<sequence>MMGVLKSAIGDMLMTFSWVVLSATFGIQTAAIISAGDFQAITWAPLVILTSLIFVYVSIFTVIFGSASFNPTGSAAFYVAGVPGDTLFSLAIRLPAQAIGAAGGALAIMEFIPEKYKHMIGGPSLQVDVHTGAIAETILSFGITFAVLLIILRGPRRLLAKTFLLALATISFVVAGSKYTGPAMNPAIAFGWAYMYSSHNTWDHIYVYWISSFVGALSAALLFRSIFPPPRPQKKKQKKA</sequence>
<gene>
    <name type="primary">SIP1-1</name>
    <name type="ordered locus">At3g04090</name>
    <name type="ORF">T6K12.29</name>
</gene>
<keyword id="KW-0256">Endoplasmic reticulum</keyword>
<keyword id="KW-0472">Membrane</keyword>
<keyword id="KW-1185">Reference proteome</keyword>
<keyword id="KW-0677">Repeat</keyword>
<keyword id="KW-0812">Transmembrane</keyword>
<keyword id="KW-1133">Transmembrane helix</keyword>
<keyword id="KW-0813">Transport</keyword>
<organism>
    <name type="scientific">Arabidopsis thaliana</name>
    <name type="common">Mouse-ear cress</name>
    <dbReference type="NCBI Taxonomy" id="3702"/>
    <lineage>
        <taxon>Eukaryota</taxon>
        <taxon>Viridiplantae</taxon>
        <taxon>Streptophyta</taxon>
        <taxon>Embryophyta</taxon>
        <taxon>Tracheophyta</taxon>
        <taxon>Spermatophyta</taxon>
        <taxon>Magnoliopsida</taxon>
        <taxon>eudicotyledons</taxon>
        <taxon>Gunneridae</taxon>
        <taxon>Pentapetalae</taxon>
        <taxon>rosids</taxon>
        <taxon>malvids</taxon>
        <taxon>Brassicales</taxon>
        <taxon>Brassicaceae</taxon>
        <taxon>Camelineae</taxon>
        <taxon>Arabidopsis</taxon>
    </lineage>
</organism>
<name>SIP11_ARATH</name>
<evidence type="ECO:0000255" key="1"/>
<evidence type="ECO:0000269" key="2">
    <source>
    </source>
</evidence>
<evidence type="ECO:0000269" key="3">
    <source>
    </source>
</evidence>
<evidence type="ECO:0000305" key="4"/>
<proteinExistence type="evidence at transcript level"/>
<comment type="function">
    <text evidence="3">Water channel required to facilitate the transport of water across cell membrane.</text>
</comment>
<comment type="subcellular location">
    <subcellularLocation>
        <location evidence="3">Endoplasmic reticulum membrane</location>
        <topology evidence="3">Multi-pass membrane protein</topology>
    </subcellularLocation>
</comment>
<comment type="tissue specificity">
    <text evidence="2 3">Expressed in roots and above ground. Expressed in elongating regions of the root tips, trichome cells of the rosette leaves, vascular tissues of the flower petals, stigma, stamens (anthers and filaments), pollen and the top and bottom (receptacle) of siliques.</text>
</comment>
<comment type="domain">
    <text>Aquaporins contain two tandem repeats each containing three membrane-spanning domains and a pore-forming loop with the signature motif Asn-Pro-Ala/Thr (NPA).</text>
</comment>
<comment type="similarity">
    <text evidence="4">Belongs to the MIP/aquaporin (TC 1.A.8) family. SIP (TC 1.A.8.10) subfamily.</text>
</comment>